<keyword id="KW-0274">FAD</keyword>
<keyword id="KW-0285">Flavoprotein</keyword>
<keyword id="KW-0560">Oxidoreductase</keyword>
<keyword id="KW-1185">Reference proteome</keyword>
<name>YB63_SCHPO</name>
<accession>Q09744</accession>
<feature type="chain" id="PRO_0000167630" description="Uncharacterized FAD-binding protein C12C2.03c">
    <location>
        <begin position="1"/>
        <end position="571"/>
    </location>
</feature>
<feature type="domain" description="FAD-binding FR-type" evidence="2">
    <location>
        <begin position="135"/>
        <end position="389"/>
    </location>
</feature>
<feature type="region of interest" description="Disordered" evidence="3">
    <location>
        <begin position="1"/>
        <end position="25"/>
    </location>
</feature>
<feature type="region of interest" description="Disordered" evidence="3">
    <location>
        <begin position="447"/>
        <end position="479"/>
    </location>
</feature>
<reference key="1">
    <citation type="journal article" date="2002" name="Nature">
        <title>The genome sequence of Schizosaccharomyces pombe.</title>
        <authorList>
            <person name="Wood V."/>
            <person name="Gwilliam R."/>
            <person name="Rajandream M.A."/>
            <person name="Lyne M.H."/>
            <person name="Lyne R."/>
            <person name="Stewart A."/>
            <person name="Sgouros J.G."/>
            <person name="Peat N."/>
            <person name="Hayles J."/>
            <person name="Baker S.G."/>
            <person name="Basham D."/>
            <person name="Bowman S."/>
            <person name="Brooks K."/>
            <person name="Brown D."/>
            <person name="Brown S."/>
            <person name="Chillingworth T."/>
            <person name="Churcher C.M."/>
            <person name="Collins M."/>
            <person name="Connor R."/>
            <person name="Cronin A."/>
            <person name="Davis P."/>
            <person name="Feltwell T."/>
            <person name="Fraser A."/>
            <person name="Gentles S."/>
            <person name="Goble A."/>
            <person name="Hamlin N."/>
            <person name="Harris D.E."/>
            <person name="Hidalgo J."/>
            <person name="Hodgson G."/>
            <person name="Holroyd S."/>
            <person name="Hornsby T."/>
            <person name="Howarth S."/>
            <person name="Huckle E.J."/>
            <person name="Hunt S."/>
            <person name="Jagels K."/>
            <person name="James K.D."/>
            <person name="Jones L."/>
            <person name="Jones M."/>
            <person name="Leather S."/>
            <person name="McDonald S."/>
            <person name="McLean J."/>
            <person name="Mooney P."/>
            <person name="Moule S."/>
            <person name="Mungall K.L."/>
            <person name="Murphy L.D."/>
            <person name="Niblett D."/>
            <person name="Odell C."/>
            <person name="Oliver K."/>
            <person name="O'Neil S."/>
            <person name="Pearson D."/>
            <person name="Quail M.A."/>
            <person name="Rabbinowitsch E."/>
            <person name="Rutherford K.M."/>
            <person name="Rutter S."/>
            <person name="Saunders D."/>
            <person name="Seeger K."/>
            <person name="Sharp S."/>
            <person name="Skelton J."/>
            <person name="Simmonds M.N."/>
            <person name="Squares R."/>
            <person name="Squares S."/>
            <person name="Stevens K."/>
            <person name="Taylor K."/>
            <person name="Taylor R.G."/>
            <person name="Tivey A."/>
            <person name="Walsh S.V."/>
            <person name="Warren T."/>
            <person name="Whitehead S."/>
            <person name="Woodward J.R."/>
            <person name="Volckaert G."/>
            <person name="Aert R."/>
            <person name="Robben J."/>
            <person name="Grymonprez B."/>
            <person name="Weltjens I."/>
            <person name="Vanstreels E."/>
            <person name="Rieger M."/>
            <person name="Schaefer M."/>
            <person name="Mueller-Auer S."/>
            <person name="Gabel C."/>
            <person name="Fuchs M."/>
            <person name="Duesterhoeft A."/>
            <person name="Fritzc C."/>
            <person name="Holzer E."/>
            <person name="Moestl D."/>
            <person name="Hilbert H."/>
            <person name="Borzym K."/>
            <person name="Langer I."/>
            <person name="Beck A."/>
            <person name="Lehrach H."/>
            <person name="Reinhardt R."/>
            <person name="Pohl T.M."/>
            <person name="Eger P."/>
            <person name="Zimmermann W."/>
            <person name="Wedler H."/>
            <person name="Wambutt R."/>
            <person name="Purnelle B."/>
            <person name="Goffeau A."/>
            <person name="Cadieu E."/>
            <person name="Dreano S."/>
            <person name="Gloux S."/>
            <person name="Lelaure V."/>
            <person name="Mottier S."/>
            <person name="Galibert F."/>
            <person name="Aves S.J."/>
            <person name="Xiang Z."/>
            <person name="Hunt C."/>
            <person name="Moore K."/>
            <person name="Hurst S.M."/>
            <person name="Lucas M."/>
            <person name="Rochet M."/>
            <person name="Gaillardin C."/>
            <person name="Tallada V.A."/>
            <person name="Garzon A."/>
            <person name="Thode G."/>
            <person name="Daga R.R."/>
            <person name="Cruzado L."/>
            <person name="Jimenez J."/>
            <person name="Sanchez M."/>
            <person name="del Rey F."/>
            <person name="Benito J."/>
            <person name="Dominguez A."/>
            <person name="Revuelta J.L."/>
            <person name="Moreno S."/>
            <person name="Armstrong J."/>
            <person name="Forsburg S.L."/>
            <person name="Cerutti L."/>
            <person name="Lowe T."/>
            <person name="McCombie W.R."/>
            <person name="Paulsen I."/>
            <person name="Potashkin J."/>
            <person name="Shpakovski G.V."/>
            <person name="Ussery D."/>
            <person name="Barrell B.G."/>
            <person name="Nurse P."/>
        </authorList>
    </citation>
    <scope>NUCLEOTIDE SEQUENCE [LARGE SCALE GENOMIC DNA]</scope>
    <source>
        <strain>972 / ATCC 24843</strain>
    </source>
</reference>
<protein>
    <recommendedName>
        <fullName>Uncharacterized FAD-binding protein C12C2.03c</fullName>
    </recommendedName>
</protein>
<comment type="cofactor">
    <cofactor evidence="1">
        <name>FAD</name>
        <dbReference type="ChEBI" id="CHEBI:57692"/>
    </cofactor>
</comment>
<comment type="similarity">
    <text evidence="4">Belongs to the flavoprotein pyridine nucleotide cytochrome reductase family.</text>
</comment>
<dbReference type="EMBL" id="CU329671">
    <property type="protein sequence ID" value="CAA90816.1"/>
    <property type="molecule type" value="Genomic_DNA"/>
</dbReference>
<dbReference type="PIR" id="T39378">
    <property type="entry name" value="T39378"/>
</dbReference>
<dbReference type="RefSeq" id="NP_596020.1">
    <property type="nucleotide sequence ID" value="NM_001021928.2"/>
</dbReference>
<dbReference type="SMR" id="Q09744"/>
<dbReference type="BioGRID" id="276688">
    <property type="interactions" value="25"/>
</dbReference>
<dbReference type="FunCoup" id="Q09744">
    <property type="interactions" value="414"/>
</dbReference>
<dbReference type="STRING" id="284812.Q09744"/>
<dbReference type="iPTMnet" id="Q09744"/>
<dbReference type="PaxDb" id="4896-SPBC12C2.03c.1"/>
<dbReference type="EnsemblFungi" id="SPBC12C2.03c.1">
    <property type="protein sequence ID" value="SPBC12C2.03c.1:pep"/>
    <property type="gene ID" value="SPBC12C2.03c"/>
</dbReference>
<dbReference type="KEGG" id="spo:2540152"/>
<dbReference type="PomBase" id="SPBC12C2.03c"/>
<dbReference type="VEuPathDB" id="FungiDB:SPBC12C2.03c"/>
<dbReference type="eggNOG" id="KOG1158">
    <property type="taxonomic scope" value="Eukaryota"/>
</dbReference>
<dbReference type="HOGENOM" id="CLU_001570_17_5_1"/>
<dbReference type="InParanoid" id="Q09744"/>
<dbReference type="OMA" id="LCCGGGC"/>
<dbReference type="PhylomeDB" id="Q09744"/>
<dbReference type="PRO" id="PR:Q09744"/>
<dbReference type="Proteomes" id="UP000002485">
    <property type="component" value="Chromosome II"/>
</dbReference>
<dbReference type="GO" id="GO:0005829">
    <property type="term" value="C:cytosol"/>
    <property type="evidence" value="ECO:0007005"/>
    <property type="project" value="PomBase"/>
</dbReference>
<dbReference type="GO" id="GO:0030586">
    <property type="term" value="F:[methionine synthase] reductase (NADPH) activity"/>
    <property type="evidence" value="ECO:0000318"/>
    <property type="project" value="GO_Central"/>
</dbReference>
<dbReference type="GO" id="GO:0050660">
    <property type="term" value="F:flavin adenine dinucleotide binding"/>
    <property type="evidence" value="ECO:0000318"/>
    <property type="project" value="GO_Central"/>
</dbReference>
<dbReference type="GO" id="GO:0010181">
    <property type="term" value="F:FMN binding"/>
    <property type="evidence" value="ECO:0000318"/>
    <property type="project" value="GO_Central"/>
</dbReference>
<dbReference type="GO" id="GO:0050667">
    <property type="term" value="P:homocysteine metabolic process"/>
    <property type="evidence" value="ECO:0000318"/>
    <property type="project" value="GO_Central"/>
</dbReference>
<dbReference type="GO" id="GO:0009086">
    <property type="term" value="P:methionine biosynthetic process"/>
    <property type="evidence" value="ECO:0000318"/>
    <property type="project" value="GO_Central"/>
</dbReference>
<dbReference type="FunFam" id="3.40.50.80:FF:000027">
    <property type="entry name" value="FAD binding domain protein"/>
    <property type="match status" value="1"/>
</dbReference>
<dbReference type="FunFam" id="1.20.990.10:FF:000007">
    <property type="entry name" value="Methionine synthase reductase"/>
    <property type="match status" value="1"/>
</dbReference>
<dbReference type="Gene3D" id="1.20.990.10">
    <property type="entry name" value="NADPH-cytochrome p450 Reductase, Chain A, domain 3"/>
    <property type="match status" value="1"/>
</dbReference>
<dbReference type="Gene3D" id="3.40.50.80">
    <property type="entry name" value="Nucleotide-binding domain of ferredoxin-NADP reductase (FNR) module"/>
    <property type="match status" value="1"/>
</dbReference>
<dbReference type="Gene3D" id="2.40.30.10">
    <property type="entry name" value="Translation factors"/>
    <property type="match status" value="1"/>
</dbReference>
<dbReference type="InterPro" id="IPR003097">
    <property type="entry name" value="CysJ-like_FAD-binding"/>
</dbReference>
<dbReference type="InterPro" id="IPR017927">
    <property type="entry name" value="FAD-bd_FR_type"/>
</dbReference>
<dbReference type="InterPro" id="IPR001709">
    <property type="entry name" value="Flavoprot_Pyr_Nucl_cyt_Rdtase"/>
</dbReference>
<dbReference type="InterPro" id="IPR039261">
    <property type="entry name" value="FNR_nucleotide-bd"/>
</dbReference>
<dbReference type="InterPro" id="IPR023173">
    <property type="entry name" value="NADPH_Cyt_P450_Rdtase_alpha"/>
</dbReference>
<dbReference type="InterPro" id="IPR001433">
    <property type="entry name" value="OxRdtase_FAD/NAD-bd"/>
</dbReference>
<dbReference type="InterPro" id="IPR017938">
    <property type="entry name" value="Riboflavin_synthase-like_b-brl"/>
</dbReference>
<dbReference type="PANTHER" id="PTHR19384:SF84">
    <property type="entry name" value="METHIONINE SYNTHASE REDUCTASE"/>
    <property type="match status" value="1"/>
</dbReference>
<dbReference type="PANTHER" id="PTHR19384">
    <property type="entry name" value="NITRIC OXIDE SYNTHASE-RELATED"/>
    <property type="match status" value="1"/>
</dbReference>
<dbReference type="Pfam" id="PF00667">
    <property type="entry name" value="FAD_binding_1"/>
    <property type="match status" value="1"/>
</dbReference>
<dbReference type="Pfam" id="PF00175">
    <property type="entry name" value="NAD_binding_1"/>
    <property type="match status" value="1"/>
</dbReference>
<dbReference type="PRINTS" id="PR00371">
    <property type="entry name" value="FPNCR"/>
</dbReference>
<dbReference type="SUPFAM" id="SSF52343">
    <property type="entry name" value="Ferredoxin reductase-like, C-terminal NADP-linked domain"/>
    <property type="match status" value="1"/>
</dbReference>
<dbReference type="SUPFAM" id="SSF63380">
    <property type="entry name" value="Riboflavin synthase domain-like"/>
    <property type="match status" value="1"/>
</dbReference>
<dbReference type="PROSITE" id="PS51384">
    <property type="entry name" value="FAD_FR"/>
    <property type="match status" value="1"/>
</dbReference>
<gene>
    <name type="ORF">SPBC12C2.03c</name>
</gene>
<sequence>MAPSVATSLKAEILPSPRTSSPSSNFKTCVSNENGCINCRCSPSEPHESANVDESVNKLSKTFSKLSLNPTFQALNMDLGLLHENITLDRIPKVPENHVSLIDIDEARAKEDPNFQIHSTPSRMPPHYVQPHPPFSVFPAPILDVRELTKPGAVKRVFHFELDVSNYPLPEGEEWMVGGSFGVMAPNNEEDVDELLQLLHINPDQADAPVLLKTDGGRWPTIWAEDTPRELVTTRRELLKWTVEFMSVAPKKQLIRLLAEYAKDDTERQVLLFLVSRLGQRAFCDLRDHNVTLITLLKAFPSVQLPLDHLLTVLPQLMPRWYSLSNDPKVSNNVLEFAVTVVEINKVEGGTRSGIGSGFLKRLALRFLNGERDLVLPMYRGLHKNAFATHFASDGPMCLIGAGVGVAPFRGFVQRRLTNATCAGKVWVFHGCRDQELDELYHGEWENPLQKSSDDDASSTVSQQTETEMDSFEVKKDGTSGPNHLVVESRSHQHAYVQDEIRHRGDIVWSVLSHPHGKVYLCGGKKGFLDGVENALIDVCVQYGKMSRLEATQQLALWQSPLNLKYIKEIW</sequence>
<proteinExistence type="inferred from homology"/>
<evidence type="ECO:0000250" key="1"/>
<evidence type="ECO:0000255" key="2">
    <source>
        <dbReference type="PROSITE-ProRule" id="PRU00716"/>
    </source>
</evidence>
<evidence type="ECO:0000256" key="3">
    <source>
        <dbReference type="SAM" id="MobiDB-lite"/>
    </source>
</evidence>
<evidence type="ECO:0000305" key="4"/>
<organism>
    <name type="scientific">Schizosaccharomyces pombe (strain 972 / ATCC 24843)</name>
    <name type="common">Fission yeast</name>
    <dbReference type="NCBI Taxonomy" id="284812"/>
    <lineage>
        <taxon>Eukaryota</taxon>
        <taxon>Fungi</taxon>
        <taxon>Dikarya</taxon>
        <taxon>Ascomycota</taxon>
        <taxon>Taphrinomycotina</taxon>
        <taxon>Schizosaccharomycetes</taxon>
        <taxon>Schizosaccharomycetales</taxon>
        <taxon>Schizosaccharomycetaceae</taxon>
        <taxon>Schizosaccharomyces</taxon>
    </lineage>
</organism>